<keyword id="KW-0150">Chloroplast</keyword>
<keyword id="KW-0472">Membrane</keyword>
<keyword id="KW-0602">Photosynthesis</keyword>
<keyword id="KW-0934">Plastid</keyword>
<keyword id="KW-0677">Repeat</keyword>
<keyword id="KW-0793">Thylakoid</keyword>
<keyword id="KW-0802">TPR repeat</keyword>
<gene>
    <name evidence="1" type="primary">ycf3</name>
</gene>
<comment type="function">
    <text evidence="1">Essential for the assembly of the photosystem I (PSI) complex. May act as a chaperone-like factor to guide the assembly of the PSI subunits.</text>
</comment>
<comment type="subcellular location">
    <subcellularLocation>
        <location evidence="1">Plastid</location>
        <location evidence="1">Chloroplast thylakoid membrane</location>
        <topology evidence="1">Peripheral membrane protein</topology>
    </subcellularLocation>
</comment>
<comment type="similarity">
    <text evidence="1">Belongs to the Ycf3 family.</text>
</comment>
<reference key="1">
    <citation type="journal article" date="1995" name="Plant Mol. Biol. Rep.">
        <title>Complete nucleotide sequence of the Porphyra purpurea chloroplast genome.</title>
        <authorList>
            <person name="Reith M.E."/>
            <person name="Munholland J."/>
        </authorList>
    </citation>
    <scope>NUCLEOTIDE SEQUENCE [LARGE SCALE GENOMIC DNA]</scope>
    <source>
        <strain>Avonport</strain>
    </source>
</reference>
<feature type="chain" id="PRO_0000217820" description="Photosystem I assembly protein Ycf3">
    <location>
        <begin position="1"/>
        <end position="173"/>
    </location>
</feature>
<feature type="repeat" description="TPR 1">
    <location>
        <begin position="35"/>
        <end position="68"/>
    </location>
</feature>
<feature type="repeat" description="TPR 2">
    <location>
        <begin position="72"/>
        <end position="105"/>
    </location>
</feature>
<feature type="repeat" description="TPR 3">
    <location>
        <begin position="120"/>
        <end position="153"/>
    </location>
</feature>
<proteinExistence type="inferred from homology"/>
<organism>
    <name type="scientific">Porphyra purpurea</name>
    <name type="common">Red seaweed</name>
    <name type="synonym">Ulva purpurea</name>
    <dbReference type="NCBI Taxonomy" id="2787"/>
    <lineage>
        <taxon>Eukaryota</taxon>
        <taxon>Rhodophyta</taxon>
        <taxon>Bangiophyceae</taxon>
        <taxon>Bangiales</taxon>
        <taxon>Bangiaceae</taxon>
        <taxon>Porphyra</taxon>
    </lineage>
</organism>
<geneLocation type="chloroplast"/>
<dbReference type="EMBL" id="U38804">
    <property type="protein sequence ID" value="AAC08144.1"/>
    <property type="molecule type" value="Genomic_DNA"/>
</dbReference>
<dbReference type="PIR" id="S73179">
    <property type="entry name" value="S73179"/>
</dbReference>
<dbReference type="RefSeq" id="NP_053868.1">
    <property type="nucleotide sequence ID" value="NC_000925.1"/>
</dbReference>
<dbReference type="SMR" id="P51258"/>
<dbReference type="GeneID" id="809887"/>
<dbReference type="GO" id="GO:0009535">
    <property type="term" value="C:chloroplast thylakoid membrane"/>
    <property type="evidence" value="ECO:0007669"/>
    <property type="project" value="UniProtKB-SubCell"/>
</dbReference>
<dbReference type="GO" id="GO:0015979">
    <property type="term" value="P:photosynthesis"/>
    <property type="evidence" value="ECO:0007669"/>
    <property type="project" value="UniProtKB-UniRule"/>
</dbReference>
<dbReference type="Gene3D" id="1.25.40.10">
    <property type="entry name" value="Tetratricopeptide repeat domain"/>
    <property type="match status" value="1"/>
</dbReference>
<dbReference type="HAMAP" id="MF_00439">
    <property type="entry name" value="Ycf3"/>
    <property type="match status" value="1"/>
</dbReference>
<dbReference type="InterPro" id="IPR022818">
    <property type="entry name" value="PSI_Ycf3_assembly"/>
</dbReference>
<dbReference type="InterPro" id="IPR011990">
    <property type="entry name" value="TPR-like_helical_dom_sf"/>
</dbReference>
<dbReference type="InterPro" id="IPR019734">
    <property type="entry name" value="TPR_rpt"/>
</dbReference>
<dbReference type="NCBIfam" id="NF002725">
    <property type="entry name" value="PRK02603.1"/>
    <property type="match status" value="1"/>
</dbReference>
<dbReference type="Pfam" id="PF00515">
    <property type="entry name" value="TPR_1"/>
    <property type="match status" value="1"/>
</dbReference>
<dbReference type="Pfam" id="PF13181">
    <property type="entry name" value="TPR_8"/>
    <property type="match status" value="1"/>
</dbReference>
<dbReference type="SMART" id="SM00028">
    <property type="entry name" value="TPR"/>
    <property type="match status" value="3"/>
</dbReference>
<dbReference type="SUPFAM" id="SSF48452">
    <property type="entry name" value="TPR-like"/>
    <property type="match status" value="1"/>
</dbReference>
<dbReference type="PROSITE" id="PS50005">
    <property type="entry name" value="TPR"/>
    <property type="match status" value="3"/>
</dbReference>
<dbReference type="PROSITE" id="PS50293">
    <property type="entry name" value="TPR_REGION"/>
    <property type="match status" value="1"/>
</dbReference>
<sequence>MPRSQKNDNFIDKTFTVLADIVLKILPTSKEEKEAFSYYRDGMSAQSEGEYAEALENYYEALKLEEDPYDRSYILYNIGLIYASNGEYIKALEYYHQGLELNFKLPQALNNIAVIYHYQGVQAVEEKNIELSKLMFDKAAQYWQQAIKLAPDNYIEAQNWLKTTGRMKNIQGY</sequence>
<protein>
    <recommendedName>
        <fullName evidence="1">Photosystem I assembly protein Ycf3</fullName>
    </recommendedName>
</protein>
<accession>P51258</accession>
<name>YCF3_PORPU</name>
<evidence type="ECO:0000255" key="1">
    <source>
        <dbReference type="HAMAP-Rule" id="MF_00439"/>
    </source>
</evidence>